<accession>C3PN92</accession>
<comment type="function">
    <text evidence="1">Catalyzes the reversible oxidation of malate to oxaloacetate.</text>
</comment>
<comment type="catalytic activity">
    <reaction evidence="1">
        <text>(S)-malate + NAD(+) = oxaloacetate + NADH + H(+)</text>
        <dbReference type="Rhea" id="RHEA:21432"/>
        <dbReference type="ChEBI" id="CHEBI:15378"/>
        <dbReference type="ChEBI" id="CHEBI:15589"/>
        <dbReference type="ChEBI" id="CHEBI:16452"/>
        <dbReference type="ChEBI" id="CHEBI:57540"/>
        <dbReference type="ChEBI" id="CHEBI:57945"/>
        <dbReference type="EC" id="1.1.1.37"/>
    </reaction>
</comment>
<comment type="similarity">
    <text evidence="1">Belongs to the LDH/MDH superfamily. MDH type 3 family.</text>
</comment>
<proteinExistence type="inferred from homology"/>
<evidence type="ECO:0000255" key="1">
    <source>
        <dbReference type="HAMAP-Rule" id="MF_00487"/>
    </source>
</evidence>
<reference key="1">
    <citation type="journal article" date="2009" name="BMC Genomics">
        <title>Analysis of the Rickettsia africae genome reveals that virulence acquisition in Rickettsia species may be explained by genome reduction.</title>
        <authorList>
            <person name="Fournier P.-E."/>
            <person name="El Karkouri K."/>
            <person name="Leroy Q."/>
            <person name="Robert C."/>
            <person name="Giumelli B."/>
            <person name="Renesto P."/>
            <person name="Socolovschi C."/>
            <person name="Parola P."/>
            <person name="Audic S."/>
            <person name="Raoult D."/>
        </authorList>
    </citation>
    <scope>NUCLEOTIDE SEQUENCE [LARGE SCALE GENOMIC DNA]</scope>
    <source>
        <strain>ESF-5</strain>
    </source>
</reference>
<name>MDH_RICAE</name>
<organism>
    <name type="scientific">Rickettsia africae (strain ESF-5)</name>
    <dbReference type="NCBI Taxonomy" id="347255"/>
    <lineage>
        <taxon>Bacteria</taxon>
        <taxon>Pseudomonadati</taxon>
        <taxon>Pseudomonadota</taxon>
        <taxon>Alphaproteobacteria</taxon>
        <taxon>Rickettsiales</taxon>
        <taxon>Rickettsiaceae</taxon>
        <taxon>Rickettsieae</taxon>
        <taxon>Rickettsia</taxon>
        <taxon>spotted fever group</taxon>
    </lineage>
</organism>
<feature type="chain" id="PRO_1000206445" description="Malate dehydrogenase">
    <location>
        <begin position="1"/>
        <end position="314"/>
    </location>
</feature>
<feature type="active site" description="Proton acceptor" evidence="1">
    <location>
        <position position="177"/>
    </location>
</feature>
<feature type="binding site" evidence="1">
    <location>
        <begin position="11"/>
        <end position="16"/>
    </location>
    <ligand>
        <name>NAD(+)</name>
        <dbReference type="ChEBI" id="CHEBI:57540"/>
    </ligand>
</feature>
<feature type="binding site" evidence="1">
    <location>
        <position position="35"/>
    </location>
    <ligand>
        <name>NAD(+)</name>
        <dbReference type="ChEBI" id="CHEBI:57540"/>
    </ligand>
</feature>
<feature type="binding site" evidence="1">
    <location>
        <position position="84"/>
    </location>
    <ligand>
        <name>substrate</name>
    </ligand>
</feature>
<feature type="binding site" evidence="1">
    <location>
        <position position="90"/>
    </location>
    <ligand>
        <name>substrate</name>
    </ligand>
</feature>
<feature type="binding site" evidence="1">
    <location>
        <position position="97"/>
    </location>
    <ligand>
        <name>NAD(+)</name>
        <dbReference type="ChEBI" id="CHEBI:57540"/>
    </ligand>
</feature>
<feature type="binding site" evidence="1">
    <location>
        <begin position="120"/>
        <end position="122"/>
    </location>
    <ligand>
        <name>NAD(+)</name>
        <dbReference type="ChEBI" id="CHEBI:57540"/>
    </ligand>
</feature>
<feature type="binding site" evidence="1">
    <location>
        <position position="122"/>
    </location>
    <ligand>
        <name>substrate</name>
    </ligand>
</feature>
<feature type="binding site" evidence="1">
    <location>
        <position position="153"/>
    </location>
    <ligand>
        <name>substrate</name>
    </ligand>
</feature>
<gene>
    <name evidence="1" type="primary">mdh</name>
    <name type="ordered locus">RAF_ORF0481</name>
</gene>
<sequence length="314" mass="33653">MKQNPKISLIGSGNIGGTLAHLISLRELGDIVLFDVTEGVPQGKALDLMQAGTIAGSDINIKGTNDYKDIEGSDAIIITAGLPRKPGMSREDLISINTGIMKTVAANVKKYAPDAFVIVITNPLDVMVYVMLKESGLPHNKVIGMAGVLDSSRFNLFLAEEFKVSVSNVNSMVLGGHGDAMVPLARYSTISGVPIPDLIKMGLSSNENIEKIIDRTRNGGGEIVALLKTGSAYYAPAASAIEMLESYLKDKRQILTCAAHLQGEYGVHDLYVGVPIMIGKEGVLRVIELQLTTEEKALFDKSVEGVKKLIETIK</sequence>
<dbReference type="EC" id="1.1.1.37" evidence="1"/>
<dbReference type="EMBL" id="CP001612">
    <property type="protein sequence ID" value="ACP53402.1"/>
    <property type="molecule type" value="Genomic_DNA"/>
</dbReference>
<dbReference type="RefSeq" id="WP_012719631.1">
    <property type="nucleotide sequence ID" value="NC_012633.1"/>
</dbReference>
<dbReference type="SMR" id="C3PN92"/>
<dbReference type="KEGG" id="raf:RAF_ORF0481"/>
<dbReference type="HOGENOM" id="CLU_045401_2_1_5"/>
<dbReference type="Proteomes" id="UP000002305">
    <property type="component" value="Chromosome"/>
</dbReference>
<dbReference type="GO" id="GO:0004459">
    <property type="term" value="F:L-lactate dehydrogenase activity"/>
    <property type="evidence" value="ECO:0007669"/>
    <property type="project" value="TreeGrafter"/>
</dbReference>
<dbReference type="GO" id="GO:0030060">
    <property type="term" value="F:L-malate dehydrogenase (NAD+) activity"/>
    <property type="evidence" value="ECO:0007669"/>
    <property type="project" value="UniProtKB-UniRule"/>
</dbReference>
<dbReference type="GO" id="GO:0006089">
    <property type="term" value="P:lactate metabolic process"/>
    <property type="evidence" value="ECO:0007669"/>
    <property type="project" value="TreeGrafter"/>
</dbReference>
<dbReference type="GO" id="GO:0006099">
    <property type="term" value="P:tricarboxylic acid cycle"/>
    <property type="evidence" value="ECO:0007669"/>
    <property type="project" value="UniProtKB-UniRule"/>
</dbReference>
<dbReference type="CDD" id="cd01339">
    <property type="entry name" value="LDH-like_MDH"/>
    <property type="match status" value="1"/>
</dbReference>
<dbReference type="FunFam" id="3.40.50.720:FF:000018">
    <property type="entry name" value="Malate dehydrogenase"/>
    <property type="match status" value="1"/>
</dbReference>
<dbReference type="FunFam" id="3.90.110.10:FF:000004">
    <property type="entry name" value="Malate dehydrogenase"/>
    <property type="match status" value="1"/>
</dbReference>
<dbReference type="Gene3D" id="3.90.110.10">
    <property type="entry name" value="Lactate dehydrogenase/glycoside hydrolase, family 4, C-terminal"/>
    <property type="match status" value="1"/>
</dbReference>
<dbReference type="Gene3D" id="3.40.50.720">
    <property type="entry name" value="NAD(P)-binding Rossmann-like Domain"/>
    <property type="match status" value="1"/>
</dbReference>
<dbReference type="HAMAP" id="MF_00487">
    <property type="entry name" value="Malate_dehydrog_3"/>
    <property type="match status" value="1"/>
</dbReference>
<dbReference type="InterPro" id="IPR001557">
    <property type="entry name" value="L-lactate/malate_DH"/>
</dbReference>
<dbReference type="InterPro" id="IPR022383">
    <property type="entry name" value="Lactate/malate_DH_C"/>
</dbReference>
<dbReference type="InterPro" id="IPR001236">
    <property type="entry name" value="Lactate/malate_DH_N"/>
</dbReference>
<dbReference type="InterPro" id="IPR015955">
    <property type="entry name" value="Lactate_DH/Glyco_Ohase_4_C"/>
</dbReference>
<dbReference type="InterPro" id="IPR011275">
    <property type="entry name" value="Malate_DH_type3"/>
</dbReference>
<dbReference type="InterPro" id="IPR036291">
    <property type="entry name" value="NAD(P)-bd_dom_sf"/>
</dbReference>
<dbReference type="NCBIfam" id="TIGR01763">
    <property type="entry name" value="MalateDH_bact"/>
    <property type="match status" value="1"/>
</dbReference>
<dbReference type="NCBIfam" id="NF004863">
    <property type="entry name" value="PRK06223.1"/>
    <property type="match status" value="1"/>
</dbReference>
<dbReference type="PANTHER" id="PTHR43128">
    <property type="entry name" value="L-2-HYDROXYCARBOXYLATE DEHYDROGENASE (NAD(P)(+))"/>
    <property type="match status" value="1"/>
</dbReference>
<dbReference type="PANTHER" id="PTHR43128:SF16">
    <property type="entry name" value="L-LACTATE DEHYDROGENASE"/>
    <property type="match status" value="1"/>
</dbReference>
<dbReference type="Pfam" id="PF02866">
    <property type="entry name" value="Ldh_1_C"/>
    <property type="match status" value="1"/>
</dbReference>
<dbReference type="Pfam" id="PF00056">
    <property type="entry name" value="Ldh_1_N"/>
    <property type="match status" value="1"/>
</dbReference>
<dbReference type="PIRSF" id="PIRSF000102">
    <property type="entry name" value="Lac_mal_DH"/>
    <property type="match status" value="1"/>
</dbReference>
<dbReference type="PRINTS" id="PR00086">
    <property type="entry name" value="LLDHDRGNASE"/>
</dbReference>
<dbReference type="SUPFAM" id="SSF56327">
    <property type="entry name" value="LDH C-terminal domain-like"/>
    <property type="match status" value="1"/>
</dbReference>
<dbReference type="SUPFAM" id="SSF51735">
    <property type="entry name" value="NAD(P)-binding Rossmann-fold domains"/>
    <property type="match status" value="1"/>
</dbReference>
<keyword id="KW-0520">NAD</keyword>
<keyword id="KW-0560">Oxidoreductase</keyword>
<keyword id="KW-0816">Tricarboxylic acid cycle</keyword>
<protein>
    <recommendedName>
        <fullName evidence="1">Malate dehydrogenase</fullName>
        <ecNumber evidence="1">1.1.1.37</ecNumber>
    </recommendedName>
</protein>